<proteinExistence type="inferred from homology"/>
<protein>
    <recommendedName>
        <fullName evidence="1">Glycerol-3-phosphate dehydrogenase [NAD(P)+]</fullName>
        <ecNumber evidence="1">1.1.1.94</ecNumber>
    </recommendedName>
    <alternativeName>
        <fullName evidence="1">NAD(P)(+)-dependent glycerol-3-phosphate dehydrogenase</fullName>
    </alternativeName>
    <alternativeName>
        <fullName evidence="1">NAD(P)H-dependent dihydroxyacetone-phosphate reductase</fullName>
    </alternativeName>
</protein>
<evidence type="ECO:0000255" key="1">
    <source>
        <dbReference type="HAMAP-Rule" id="MF_00394"/>
    </source>
</evidence>
<organism>
    <name type="scientific">Escherichia coli O1:K1 / APEC</name>
    <dbReference type="NCBI Taxonomy" id="405955"/>
    <lineage>
        <taxon>Bacteria</taxon>
        <taxon>Pseudomonadati</taxon>
        <taxon>Pseudomonadota</taxon>
        <taxon>Gammaproteobacteria</taxon>
        <taxon>Enterobacterales</taxon>
        <taxon>Enterobacteriaceae</taxon>
        <taxon>Escherichia</taxon>
    </lineage>
</organism>
<feature type="chain" id="PRO_1000049501" description="Glycerol-3-phosphate dehydrogenase [NAD(P)+]">
    <location>
        <begin position="1"/>
        <end position="339"/>
    </location>
</feature>
<feature type="active site" description="Proton acceptor" evidence="1">
    <location>
        <position position="195"/>
    </location>
</feature>
<feature type="binding site" evidence="1">
    <location>
        <position position="15"/>
    </location>
    <ligand>
        <name>NADPH</name>
        <dbReference type="ChEBI" id="CHEBI:57783"/>
    </ligand>
</feature>
<feature type="binding site" evidence="1">
    <location>
        <position position="16"/>
    </location>
    <ligand>
        <name>NADPH</name>
        <dbReference type="ChEBI" id="CHEBI:57783"/>
    </ligand>
</feature>
<feature type="binding site" evidence="1">
    <location>
        <position position="36"/>
    </location>
    <ligand>
        <name>NADPH</name>
        <dbReference type="ChEBI" id="CHEBI:57783"/>
    </ligand>
</feature>
<feature type="binding site" evidence="1">
    <location>
        <position position="110"/>
    </location>
    <ligand>
        <name>NADPH</name>
        <dbReference type="ChEBI" id="CHEBI:57783"/>
    </ligand>
</feature>
<feature type="binding site" evidence="1">
    <location>
        <position position="110"/>
    </location>
    <ligand>
        <name>sn-glycerol 3-phosphate</name>
        <dbReference type="ChEBI" id="CHEBI:57597"/>
    </ligand>
</feature>
<feature type="binding site" evidence="1">
    <location>
        <position position="139"/>
    </location>
    <ligand>
        <name>sn-glycerol 3-phosphate</name>
        <dbReference type="ChEBI" id="CHEBI:57597"/>
    </ligand>
</feature>
<feature type="binding site" evidence="1">
    <location>
        <position position="141"/>
    </location>
    <ligand>
        <name>sn-glycerol 3-phosphate</name>
        <dbReference type="ChEBI" id="CHEBI:57597"/>
    </ligand>
</feature>
<feature type="binding site" evidence="1">
    <location>
        <position position="143"/>
    </location>
    <ligand>
        <name>NADPH</name>
        <dbReference type="ChEBI" id="CHEBI:57783"/>
    </ligand>
</feature>
<feature type="binding site" evidence="1">
    <location>
        <position position="195"/>
    </location>
    <ligand>
        <name>sn-glycerol 3-phosphate</name>
        <dbReference type="ChEBI" id="CHEBI:57597"/>
    </ligand>
</feature>
<feature type="binding site" evidence="1">
    <location>
        <position position="248"/>
    </location>
    <ligand>
        <name>sn-glycerol 3-phosphate</name>
        <dbReference type="ChEBI" id="CHEBI:57597"/>
    </ligand>
</feature>
<feature type="binding site" evidence="1">
    <location>
        <position position="258"/>
    </location>
    <ligand>
        <name>sn-glycerol 3-phosphate</name>
        <dbReference type="ChEBI" id="CHEBI:57597"/>
    </ligand>
</feature>
<feature type="binding site" evidence="1">
    <location>
        <position position="259"/>
    </location>
    <ligand>
        <name>NADPH</name>
        <dbReference type="ChEBI" id="CHEBI:57783"/>
    </ligand>
</feature>
<feature type="binding site" evidence="1">
    <location>
        <position position="259"/>
    </location>
    <ligand>
        <name>sn-glycerol 3-phosphate</name>
        <dbReference type="ChEBI" id="CHEBI:57597"/>
    </ligand>
</feature>
<feature type="binding site" evidence="1">
    <location>
        <position position="260"/>
    </location>
    <ligand>
        <name>sn-glycerol 3-phosphate</name>
        <dbReference type="ChEBI" id="CHEBI:57597"/>
    </ligand>
</feature>
<feature type="binding site" evidence="1">
    <location>
        <position position="283"/>
    </location>
    <ligand>
        <name>NADPH</name>
        <dbReference type="ChEBI" id="CHEBI:57783"/>
    </ligand>
</feature>
<feature type="binding site" evidence="1">
    <location>
        <position position="285"/>
    </location>
    <ligand>
        <name>NADPH</name>
        <dbReference type="ChEBI" id="CHEBI:57783"/>
    </ligand>
</feature>
<reference key="1">
    <citation type="journal article" date="2007" name="J. Bacteriol.">
        <title>The genome sequence of avian pathogenic Escherichia coli strain O1:K1:H7 shares strong similarities with human extraintestinal pathogenic E. coli genomes.</title>
        <authorList>
            <person name="Johnson T.J."/>
            <person name="Kariyawasam S."/>
            <person name="Wannemuehler Y."/>
            <person name="Mangiamele P."/>
            <person name="Johnson S.J."/>
            <person name="Doetkott C."/>
            <person name="Skyberg J.A."/>
            <person name="Lynne A.M."/>
            <person name="Johnson J.R."/>
            <person name="Nolan L.K."/>
        </authorList>
    </citation>
    <scope>NUCLEOTIDE SEQUENCE [LARGE SCALE GENOMIC DNA]</scope>
</reference>
<keyword id="KW-0963">Cytoplasm</keyword>
<keyword id="KW-0444">Lipid biosynthesis</keyword>
<keyword id="KW-0443">Lipid metabolism</keyword>
<keyword id="KW-0520">NAD</keyword>
<keyword id="KW-0521">NADP</keyword>
<keyword id="KW-0547">Nucleotide-binding</keyword>
<keyword id="KW-0560">Oxidoreductase</keyword>
<keyword id="KW-0594">Phospholipid biosynthesis</keyword>
<keyword id="KW-1208">Phospholipid metabolism</keyword>
<keyword id="KW-1185">Reference proteome</keyword>
<sequence>MNQRNASMTVIGAGSYGTALAITLARNGHEVVLWGHDPEHIATLERDRCNAAFLPDVPFPDTLHLESDLATALAASRNILVVVPSHVFGEVLRQIKPLMRPDARLVWATKGLEAETGRLLQDVAREALGDQIPLAVISGPTFAKELAAGLPTAISLASTDQTFADDLQQLLHCGKSFRVYSNPDFIGVQLGGAVKNVIAIGAGMSDGIGFGANARTALITRGLAEMSRLGAALGADPATFMGMAGLGDLVLTCTDNQSRNRRFGMMLGQGMDVQSAQEKIGQVVEGYRNTKEVRELAHRFGVEMPITEEIYQVLYCGKNAREAALTLLGRARKDERSSH</sequence>
<name>GPDA_ECOK1</name>
<dbReference type="EC" id="1.1.1.94" evidence="1"/>
<dbReference type="EMBL" id="CP000468">
    <property type="protein sequence ID" value="ABJ03085.1"/>
    <property type="molecule type" value="Genomic_DNA"/>
</dbReference>
<dbReference type="RefSeq" id="WP_001076194.1">
    <property type="nucleotide sequence ID" value="NZ_CADILS010000015.1"/>
</dbReference>
<dbReference type="SMR" id="A1AHE5"/>
<dbReference type="GeneID" id="93778322"/>
<dbReference type="KEGG" id="ecv:APECO1_2847"/>
<dbReference type="HOGENOM" id="CLU_033449_0_2_6"/>
<dbReference type="UniPathway" id="UPA00940"/>
<dbReference type="Proteomes" id="UP000008216">
    <property type="component" value="Chromosome"/>
</dbReference>
<dbReference type="GO" id="GO:0005829">
    <property type="term" value="C:cytosol"/>
    <property type="evidence" value="ECO:0007669"/>
    <property type="project" value="TreeGrafter"/>
</dbReference>
<dbReference type="GO" id="GO:0047952">
    <property type="term" value="F:glycerol-3-phosphate dehydrogenase [NAD(P)+] activity"/>
    <property type="evidence" value="ECO:0007669"/>
    <property type="project" value="UniProtKB-UniRule"/>
</dbReference>
<dbReference type="GO" id="GO:0051287">
    <property type="term" value="F:NAD binding"/>
    <property type="evidence" value="ECO:0007669"/>
    <property type="project" value="InterPro"/>
</dbReference>
<dbReference type="GO" id="GO:0005975">
    <property type="term" value="P:carbohydrate metabolic process"/>
    <property type="evidence" value="ECO:0007669"/>
    <property type="project" value="InterPro"/>
</dbReference>
<dbReference type="GO" id="GO:0046167">
    <property type="term" value="P:glycerol-3-phosphate biosynthetic process"/>
    <property type="evidence" value="ECO:0007669"/>
    <property type="project" value="UniProtKB-UniRule"/>
</dbReference>
<dbReference type="GO" id="GO:0046168">
    <property type="term" value="P:glycerol-3-phosphate catabolic process"/>
    <property type="evidence" value="ECO:0007669"/>
    <property type="project" value="InterPro"/>
</dbReference>
<dbReference type="GO" id="GO:0046474">
    <property type="term" value="P:glycerophospholipid biosynthetic process"/>
    <property type="evidence" value="ECO:0007669"/>
    <property type="project" value="TreeGrafter"/>
</dbReference>
<dbReference type="FunFam" id="1.10.1040.10:FF:000001">
    <property type="entry name" value="Glycerol-3-phosphate dehydrogenase [NAD(P)+]"/>
    <property type="match status" value="1"/>
</dbReference>
<dbReference type="FunFam" id="3.40.50.720:FF:000019">
    <property type="entry name" value="Glycerol-3-phosphate dehydrogenase [NAD(P)+]"/>
    <property type="match status" value="1"/>
</dbReference>
<dbReference type="Gene3D" id="1.10.1040.10">
    <property type="entry name" value="N-(1-d-carboxylethyl)-l-norvaline Dehydrogenase, domain 2"/>
    <property type="match status" value="1"/>
</dbReference>
<dbReference type="Gene3D" id="3.40.50.720">
    <property type="entry name" value="NAD(P)-binding Rossmann-like Domain"/>
    <property type="match status" value="1"/>
</dbReference>
<dbReference type="HAMAP" id="MF_00394">
    <property type="entry name" value="NAD_Glyc3P_dehydrog"/>
    <property type="match status" value="1"/>
</dbReference>
<dbReference type="InterPro" id="IPR008927">
    <property type="entry name" value="6-PGluconate_DH-like_C_sf"/>
</dbReference>
<dbReference type="InterPro" id="IPR013328">
    <property type="entry name" value="6PGD_dom2"/>
</dbReference>
<dbReference type="InterPro" id="IPR006168">
    <property type="entry name" value="G3P_DH_NAD-dep"/>
</dbReference>
<dbReference type="InterPro" id="IPR006109">
    <property type="entry name" value="G3P_DH_NAD-dep_C"/>
</dbReference>
<dbReference type="InterPro" id="IPR011128">
    <property type="entry name" value="G3P_DH_NAD-dep_N"/>
</dbReference>
<dbReference type="InterPro" id="IPR036291">
    <property type="entry name" value="NAD(P)-bd_dom_sf"/>
</dbReference>
<dbReference type="NCBIfam" id="NF000939">
    <property type="entry name" value="PRK00094.1-1"/>
    <property type="match status" value="1"/>
</dbReference>
<dbReference type="NCBIfam" id="NF000940">
    <property type="entry name" value="PRK00094.1-2"/>
    <property type="match status" value="1"/>
</dbReference>
<dbReference type="NCBIfam" id="NF000942">
    <property type="entry name" value="PRK00094.1-4"/>
    <property type="match status" value="1"/>
</dbReference>
<dbReference type="PANTHER" id="PTHR11728">
    <property type="entry name" value="GLYCEROL-3-PHOSPHATE DEHYDROGENASE"/>
    <property type="match status" value="1"/>
</dbReference>
<dbReference type="PANTHER" id="PTHR11728:SF1">
    <property type="entry name" value="GLYCEROL-3-PHOSPHATE DEHYDROGENASE [NAD(+)] 2, CHLOROPLASTIC"/>
    <property type="match status" value="1"/>
</dbReference>
<dbReference type="Pfam" id="PF07479">
    <property type="entry name" value="NAD_Gly3P_dh_C"/>
    <property type="match status" value="1"/>
</dbReference>
<dbReference type="Pfam" id="PF01210">
    <property type="entry name" value="NAD_Gly3P_dh_N"/>
    <property type="match status" value="1"/>
</dbReference>
<dbReference type="PIRSF" id="PIRSF000114">
    <property type="entry name" value="Glycerol-3-P_dh"/>
    <property type="match status" value="1"/>
</dbReference>
<dbReference type="PRINTS" id="PR00077">
    <property type="entry name" value="GPDHDRGNASE"/>
</dbReference>
<dbReference type="SUPFAM" id="SSF48179">
    <property type="entry name" value="6-phosphogluconate dehydrogenase C-terminal domain-like"/>
    <property type="match status" value="1"/>
</dbReference>
<dbReference type="SUPFAM" id="SSF51735">
    <property type="entry name" value="NAD(P)-binding Rossmann-fold domains"/>
    <property type="match status" value="1"/>
</dbReference>
<dbReference type="PROSITE" id="PS00957">
    <property type="entry name" value="NAD_G3PDH"/>
    <property type="match status" value="1"/>
</dbReference>
<gene>
    <name evidence="1" type="primary">gpsA</name>
    <name type="ordered locus">Ecok1_35910</name>
    <name type="ORF">APECO1_2847</name>
</gene>
<accession>A1AHE5</accession>
<comment type="function">
    <text evidence="1">Catalyzes the reduction of the glycolytic intermediate dihydroxyacetone phosphate (DHAP) to sn-glycerol 3-phosphate (G3P), the key precursor for phospholipid synthesis.</text>
</comment>
<comment type="catalytic activity">
    <reaction evidence="1">
        <text>sn-glycerol 3-phosphate + NAD(+) = dihydroxyacetone phosphate + NADH + H(+)</text>
        <dbReference type="Rhea" id="RHEA:11092"/>
        <dbReference type="ChEBI" id="CHEBI:15378"/>
        <dbReference type="ChEBI" id="CHEBI:57540"/>
        <dbReference type="ChEBI" id="CHEBI:57597"/>
        <dbReference type="ChEBI" id="CHEBI:57642"/>
        <dbReference type="ChEBI" id="CHEBI:57945"/>
        <dbReference type="EC" id="1.1.1.94"/>
    </reaction>
    <physiologicalReaction direction="right-to-left" evidence="1">
        <dbReference type="Rhea" id="RHEA:11094"/>
    </physiologicalReaction>
</comment>
<comment type="catalytic activity">
    <reaction evidence="1">
        <text>sn-glycerol 3-phosphate + NADP(+) = dihydroxyacetone phosphate + NADPH + H(+)</text>
        <dbReference type="Rhea" id="RHEA:11096"/>
        <dbReference type="ChEBI" id="CHEBI:15378"/>
        <dbReference type="ChEBI" id="CHEBI:57597"/>
        <dbReference type="ChEBI" id="CHEBI:57642"/>
        <dbReference type="ChEBI" id="CHEBI:57783"/>
        <dbReference type="ChEBI" id="CHEBI:58349"/>
        <dbReference type="EC" id="1.1.1.94"/>
    </reaction>
    <physiologicalReaction direction="right-to-left" evidence="1">
        <dbReference type="Rhea" id="RHEA:11098"/>
    </physiologicalReaction>
</comment>
<comment type="pathway">
    <text evidence="1">Membrane lipid metabolism; glycerophospholipid metabolism.</text>
</comment>
<comment type="subcellular location">
    <subcellularLocation>
        <location evidence="1">Cytoplasm</location>
    </subcellularLocation>
</comment>
<comment type="similarity">
    <text evidence="1">Belongs to the NAD-dependent glycerol-3-phosphate dehydrogenase family.</text>
</comment>